<proteinExistence type="evidence at protein level"/>
<evidence type="ECO:0000250" key="1"/>
<evidence type="ECO:0000250" key="2">
    <source>
        <dbReference type="UniProtKB" id="Q9WYP7"/>
    </source>
</evidence>
<evidence type="ECO:0000269" key="3">
    <source>
    </source>
</evidence>
<evidence type="ECO:0000269" key="4">
    <source>
    </source>
</evidence>
<evidence type="ECO:0000303" key="5">
    <source>
    </source>
</evidence>
<evidence type="ECO:0000303" key="6">
    <source ref="1"/>
</evidence>
<evidence type="ECO:0000303" key="7">
    <source ref="2"/>
</evidence>
<evidence type="ECO:0000303" key="8">
    <source ref="3"/>
</evidence>
<evidence type="ECO:0000305" key="9"/>
<feature type="chain" id="PRO_0000289241" description="Putative hydroxypyruvate isomerase">
    <location>
        <begin position="1"/>
        <end position="277"/>
    </location>
</feature>
<feature type="active site" description="Proton donor/acceptor" evidence="2">
    <location>
        <position position="150"/>
    </location>
</feature>
<feature type="active site" description="Proton donor/acceptor" evidence="2">
    <location>
        <position position="249"/>
    </location>
</feature>
<feature type="splice variant" id="VSP_025986" description="In isoform 2 and isoform 4." evidence="7">
    <location>
        <begin position="1"/>
        <end position="73"/>
    </location>
</feature>
<feature type="splice variant" id="VSP_025987" description="In isoform 2 and isoform 3." evidence="5 6 7 8">
    <location>
        <begin position="248"/>
        <end position="277"/>
    </location>
</feature>
<feature type="sequence variant" id="VAR_032611" description="In dbSNP:rs17850049." evidence="3">
    <original>D</original>
    <variation>N</variation>
    <location>
        <position position="239"/>
    </location>
</feature>
<feature type="sequence conflict" description="In Ref. 1; AAV84474, 3; AAK67642 and 5; AAH19041." evidence="9" ref="1 3 5">
    <original>S</original>
    <variation>P</variation>
    <location>
        <position position="18"/>
    </location>
</feature>
<feature type="sequence conflict" description="In Ref. 1; AAV84474." evidence="9" ref="1">
    <original>S</original>
    <variation>KP</variation>
    <location>
        <position position="224"/>
    </location>
</feature>
<gene>
    <name type="primary">HYI</name>
    <name type="ORF">HT036</name>
    <name type="ORF">SB156</name>
</gene>
<name>HYI_HUMAN</name>
<organism>
    <name type="scientific">Homo sapiens</name>
    <name type="common">Human</name>
    <dbReference type="NCBI Taxonomy" id="9606"/>
    <lineage>
        <taxon>Eukaryota</taxon>
        <taxon>Metazoa</taxon>
        <taxon>Chordata</taxon>
        <taxon>Craniata</taxon>
        <taxon>Vertebrata</taxon>
        <taxon>Euteleostomi</taxon>
        <taxon>Mammalia</taxon>
        <taxon>Eutheria</taxon>
        <taxon>Euarchontoglires</taxon>
        <taxon>Primates</taxon>
        <taxon>Haplorrhini</taxon>
        <taxon>Catarrhini</taxon>
        <taxon>Hominidae</taxon>
        <taxon>Homo</taxon>
    </lineage>
</organism>
<keyword id="KW-0025">Alternative splicing</keyword>
<keyword id="KW-0413">Isomerase</keyword>
<keyword id="KW-1267">Proteomics identification</keyword>
<keyword id="KW-1185">Reference proteome</keyword>
<accession>Q5T013</accession>
<accession>D3DPX4</accession>
<accession>D3DPX5</accession>
<accession>Q5Q9A2</accession>
<accession>Q7Z778</accession>
<accession>Q96S83</accession>
<accession>Q9BZR3</accession>
<accession>Q9BZR4</accession>
<dbReference type="EC" id="5.3.1.22"/>
<dbReference type="EMBL" id="AY775560">
    <property type="protein sequence ID" value="AAV84474.1"/>
    <property type="status" value="ALT_FRAME"/>
    <property type="molecule type" value="mRNA"/>
</dbReference>
<dbReference type="EMBL" id="AF284750">
    <property type="protein sequence ID" value="AAG59852.1"/>
    <property type="molecule type" value="mRNA"/>
</dbReference>
<dbReference type="EMBL" id="AF284751">
    <property type="protein sequence ID" value="AAG59853.1"/>
    <property type="molecule type" value="mRNA"/>
</dbReference>
<dbReference type="EMBL" id="AY037165">
    <property type="protein sequence ID" value="AAK67642.1"/>
    <property type="molecule type" value="mRNA"/>
</dbReference>
<dbReference type="EMBL" id="AL583862">
    <property type="status" value="NOT_ANNOTATED_CDS"/>
    <property type="molecule type" value="Genomic_DNA"/>
</dbReference>
<dbReference type="EMBL" id="CH471059">
    <property type="protein sequence ID" value="EAX07090.1"/>
    <property type="molecule type" value="Genomic_DNA"/>
</dbReference>
<dbReference type="EMBL" id="CH471059">
    <property type="protein sequence ID" value="EAX07091.1"/>
    <property type="molecule type" value="Genomic_DNA"/>
</dbReference>
<dbReference type="EMBL" id="CH471059">
    <property type="protein sequence ID" value="EAX07093.1"/>
    <property type="molecule type" value="Genomic_DNA"/>
</dbReference>
<dbReference type="EMBL" id="CH471059">
    <property type="protein sequence ID" value="EAX07094.1"/>
    <property type="molecule type" value="Genomic_DNA"/>
</dbReference>
<dbReference type="EMBL" id="BC006140">
    <property type="protein sequence ID" value="AAH06140.1"/>
    <property type="status" value="ALT_SEQ"/>
    <property type="molecule type" value="mRNA"/>
</dbReference>
<dbReference type="EMBL" id="BC019041">
    <property type="protein sequence ID" value="AAH19041.1"/>
    <property type="status" value="ALT_INIT"/>
    <property type="molecule type" value="mRNA"/>
</dbReference>
<dbReference type="CCDS" id="CCDS488.2">
    <molecule id="Q5T013-3"/>
</dbReference>
<dbReference type="CCDS" id="CCDS53309.1">
    <molecule id="Q5T013-1"/>
</dbReference>
<dbReference type="RefSeq" id="NP_001177809.1">
    <molecule id="Q5T013-1"/>
    <property type="nucleotide sequence ID" value="NM_001190880.3"/>
</dbReference>
<dbReference type="RefSeq" id="NP_001230455.1">
    <property type="nucleotide sequence ID" value="NM_001243526.1"/>
</dbReference>
<dbReference type="RefSeq" id="NP_112484.3">
    <molecule id="Q5T013-3"/>
    <property type="nucleotide sequence ID" value="NM_031207.6"/>
</dbReference>
<dbReference type="SMR" id="Q5T013"/>
<dbReference type="BioGRID" id="123621">
    <property type="interactions" value="27"/>
</dbReference>
<dbReference type="FunCoup" id="Q5T013">
    <property type="interactions" value="140"/>
</dbReference>
<dbReference type="IntAct" id="Q5T013">
    <property type="interactions" value="5"/>
</dbReference>
<dbReference type="STRING" id="9606.ENSP00000361511"/>
<dbReference type="iPTMnet" id="Q5T013"/>
<dbReference type="PhosphoSitePlus" id="Q5T013"/>
<dbReference type="BioMuta" id="HYI"/>
<dbReference type="DMDM" id="152125829"/>
<dbReference type="jPOST" id="Q5T013"/>
<dbReference type="MassIVE" id="Q5T013"/>
<dbReference type="PaxDb" id="9606-ENSP00000361502"/>
<dbReference type="PeptideAtlas" id="Q5T013"/>
<dbReference type="ProteomicsDB" id="64113">
    <molecule id="Q5T013-1"/>
</dbReference>
<dbReference type="ProteomicsDB" id="64114">
    <molecule id="Q5T013-2"/>
</dbReference>
<dbReference type="ProteomicsDB" id="64115">
    <molecule id="Q5T013-3"/>
</dbReference>
<dbReference type="ProteomicsDB" id="64116">
    <molecule id="Q5T013-4"/>
</dbReference>
<dbReference type="Pumba" id="Q5T013"/>
<dbReference type="Antibodypedia" id="32347">
    <property type="antibodies" value="156 antibodies from 25 providers"/>
</dbReference>
<dbReference type="DNASU" id="81888"/>
<dbReference type="Ensembl" id="ENST00000372430.9">
    <molecule id="Q5T013-1"/>
    <property type="protein sequence ID" value="ENSP00000361507.4"/>
    <property type="gene ID" value="ENSG00000178922.18"/>
</dbReference>
<dbReference type="Ensembl" id="ENST00000372432.5">
    <molecule id="Q5T013-3"/>
    <property type="protein sequence ID" value="ENSP00000361509.1"/>
    <property type="gene ID" value="ENSG00000178922.18"/>
</dbReference>
<dbReference type="GeneID" id="81888"/>
<dbReference type="KEGG" id="hsa:81888"/>
<dbReference type="MANE-Select" id="ENST00000372430.9">
    <property type="protein sequence ID" value="ENSP00000361507.4"/>
    <property type="RefSeq nucleotide sequence ID" value="NM_001190880.3"/>
    <property type="RefSeq protein sequence ID" value="NP_001177809.1"/>
</dbReference>
<dbReference type="UCSC" id="uc001cjn.4">
    <molecule id="Q5T013-1"/>
    <property type="organism name" value="human"/>
</dbReference>
<dbReference type="AGR" id="HGNC:26948"/>
<dbReference type="CTD" id="81888"/>
<dbReference type="DisGeNET" id="81888"/>
<dbReference type="GeneCards" id="HYI"/>
<dbReference type="HGNC" id="HGNC:26948">
    <property type="gene designation" value="HYI"/>
</dbReference>
<dbReference type="HPA" id="ENSG00000178922">
    <property type="expression patterns" value="Low tissue specificity"/>
</dbReference>
<dbReference type="MIM" id="619128">
    <property type="type" value="gene"/>
</dbReference>
<dbReference type="neXtProt" id="NX_Q5T013"/>
<dbReference type="OpenTargets" id="ENSG00000178922"/>
<dbReference type="PharmGKB" id="PA142671668"/>
<dbReference type="VEuPathDB" id="HostDB:ENSG00000178922"/>
<dbReference type="eggNOG" id="KOG4518">
    <property type="taxonomic scope" value="Eukaryota"/>
</dbReference>
<dbReference type="GeneTree" id="ENSGT00390000005462"/>
<dbReference type="InParanoid" id="Q5T013"/>
<dbReference type="OMA" id="CEYRPRA"/>
<dbReference type="OrthoDB" id="4214675at2759"/>
<dbReference type="PAN-GO" id="Q5T013">
    <property type="GO annotations" value="2 GO annotations based on evolutionary models"/>
</dbReference>
<dbReference type="PhylomeDB" id="Q5T013"/>
<dbReference type="TreeFam" id="TF312858"/>
<dbReference type="PathwayCommons" id="Q5T013"/>
<dbReference type="SignaLink" id="Q5T013"/>
<dbReference type="BioGRID-ORCS" id="81888">
    <property type="hits" value="22 hits in 1147 CRISPR screens"/>
</dbReference>
<dbReference type="ChiTaRS" id="HYI">
    <property type="organism name" value="human"/>
</dbReference>
<dbReference type="GenomeRNAi" id="81888"/>
<dbReference type="Pharos" id="Q5T013">
    <property type="development level" value="Tbio"/>
</dbReference>
<dbReference type="PRO" id="PR:Q5T013"/>
<dbReference type="Proteomes" id="UP000005640">
    <property type="component" value="Chromosome 1"/>
</dbReference>
<dbReference type="RNAct" id="Q5T013">
    <property type="molecule type" value="protein"/>
</dbReference>
<dbReference type="Bgee" id="ENSG00000178922">
    <property type="expression patterns" value="Expressed in body of pancreas and 185 other cell types or tissues"/>
</dbReference>
<dbReference type="ExpressionAtlas" id="Q5T013">
    <property type="expression patterns" value="baseline and differential"/>
</dbReference>
<dbReference type="GO" id="GO:0008903">
    <property type="term" value="F:hydroxypyruvate isomerase activity"/>
    <property type="evidence" value="ECO:0000318"/>
    <property type="project" value="GO_Central"/>
</dbReference>
<dbReference type="GO" id="GO:0046487">
    <property type="term" value="P:glyoxylate metabolic process"/>
    <property type="evidence" value="ECO:0000318"/>
    <property type="project" value="GO_Central"/>
</dbReference>
<dbReference type="FunFam" id="3.20.20.150:FF:000011">
    <property type="entry name" value="Putative hydroxypyruvate isomerase"/>
    <property type="match status" value="1"/>
</dbReference>
<dbReference type="Gene3D" id="3.20.20.150">
    <property type="entry name" value="Divalent-metal-dependent TIM barrel enzymes"/>
    <property type="match status" value="1"/>
</dbReference>
<dbReference type="InterPro" id="IPR026040">
    <property type="entry name" value="HyI-like"/>
</dbReference>
<dbReference type="InterPro" id="IPR050417">
    <property type="entry name" value="Sugar_Epim/Isomerase"/>
</dbReference>
<dbReference type="InterPro" id="IPR036237">
    <property type="entry name" value="Xyl_isomerase-like_sf"/>
</dbReference>
<dbReference type="InterPro" id="IPR013022">
    <property type="entry name" value="Xyl_isomerase-like_TIM-brl"/>
</dbReference>
<dbReference type="PANTHER" id="PTHR43489:SF6">
    <property type="entry name" value="HYDROXYPYRUVATE ISOMERASE-RELATED"/>
    <property type="match status" value="1"/>
</dbReference>
<dbReference type="PANTHER" id="PTHR43489">
    <property type="entry name" value="ISOMERASE"/>
    <property type="match status" value="1"/>
</dbReference>
<dbReference type="Pfam" id="PF01261">
    <property type="entry name" value="AP_endonuc_2"/>
    <property type="match status" value="1"/>
</dbReference>
<dbReference type="PIRSF" id="PIRSF006241">
    <property type="entry name" value="HyI"/>
    <property type="match status" value="1"/>
</dbReference>
<dbReference type="SUPFAM" id="SSF51658">
    <property type="entry name" value="Xylose isomerase-like"/>
    <property type="match status" value="1"/>
</dbReference>
<comment type="function">
    <text evidence="1">Catalyzes the reversible isomerization between hydroxypyruvate and 2-hydroxy-3-oxopropanoate (also termed tartronate semialdehyde).</text>
</comment>
<comment type="catalytic activity">
    <reaction>
        <text>3-hydroxypyruvate = 2-hydroxy-3-oxopropanoate</text>
        <dbReference type="Rhea" id="RHEA:11952"/>
        <dbReference type="ChEBI" id="CHEBI:17180"/>
        <dbReference type="ChEBI" id="CHEBI:57978"/>
        <dbReference type="EC" id="5.3.1.22"/>
    </reaction>
</comment>
<comment type="interaction">
    <interactant intactId="EBI-749235">
        <id>Q5T013</id>
    </interactant>
    <interactant intactId="EBI-749139">
        <id>O95865</id>
        <label>DDAH2</label>
    </interactant>
    <organismsDiffer>false</organismsDiffer>
    <experiments>2</experiments>
</comment>
<comment type="interaction">
    <interactant intactId="EBI-749235">
        <id>Q5T013</id>
    </interactant>
    <interactant intactId="EBI-1051785">
        <id>Q05519</id>
        <label>SRSF11</label>
    </interactant>
    <organismsDiffer>false</organismsDiffer>
    <experiments>3</experiments>
</comment>
<comment type="interaction">
    <interactant intactId="EBI-749235">
        <id>Q5T013</id>
    </interactant>
    <interactant intactId="EBI-742397">
        <id>Q8IYF3</id>
        <label>TEX11</label>
    </interactant>
    <organismsDiffer>false</organismsDiffer>
    <experiments>4</experiments>
</comment>
<comment type="alternative products">
    <event type="alternative splicing"/>
    <isoform>
        <id>Q5T013-1</id>
        <name>1</name>
        <sequence type="displayed"/>
    </isoform>
    <isoform>
        <id>Q5T013-2</id>
        <name>2</name>
        <sequence type="described" ref="VSP_025986 VSP_025987"/>
    </isoform>
    <isoform>
        <id>Q5T013-3</id>
        <name>3</name>
        <sequence type="described" ref="VSP_025987"/>
    </isoform>
    <isoform>
        <id>Q5T013-4</id>
        <name>4</name>
        <sequence type="described" ref="VSP_025986"/>
    </isoform>
</comment>
<comment type="induction">
    <text evidence="4">Up-regulated by exposure to 7,8-Dihydroxy-9,10-epoxy-7,8,9,10-tetrahydrobenzo[a]pyrene (BPDE) after which is found in the culture medium of amniotic epithelial cells.</text>
</comment>
<comment type="similarity">
    <text evidence="9">Belongs to the hyi family.</text>
</comment>
<comment type="sequence caution" evidence="9">
    <conflict type="frameshift">
        <sequence resource="EMBL-CDS" id="AAH06140"/>
    </conflict>
</comment>
<comment type="sequence caution" evidence="9">
    <conflict type="erroneous initiation">
        <sequence resource="EMBL-CDS" id="AAH19041"/>
    </conflict>
    <text>Truncated N-terminus.</text>
</comment>
<comment type="sequence caution" evidence="9">
    <conflict type="frameshift">
        <sequence resource="EMBL-CDS" id="AAV84474"/>
    </conflict>
</comment>
<protein>
    <recommendedName>
        <fullName>Putative hydroxypyruvate isomerase</fullName>
        <ecNumber>5.3.1.22</ecNumber>
    </recommendedName>
    <alternativeName>
        <fullName>Endothelial cell apoptosis protein E-CE1</fullName>
    </alternativeName>
</protein>
<reference key="1">
    <citation type="submission" date="2004-10" db="EMBL/GenBank/DDBJ databases">
        <title>Study of a new protein that interacts with endostatin.</title>
        <authorList>
            <person name="Zhang B.L."/>
            <person name="Fan B.X."/>
            <person name="Liu Y.N."/>
        </authorList>
    </citation>
    <scope>NUCLEOTIDE SEQUENCE [MRNA] (ISOFORM 3)</scope>
    <source>
        <tissue>Liver</tissue>
    </source>
</reference>
<reference key="2">
    <citation type="submission" date="2000-07" db="EMBL/GenBank/DDBJ databases">
        <authorList>
            <person name="Xu X."/>
            <person name="Yang Y."/>
            <person name="Gao G."/>
            <person name="Xiao H."/>
            <person name="Chen Z."/>
            <person name="Han Z."/>
        </authorList>
    </citation>
    <scope>NUCLEOTIDE SEQUENCE [LARGE SCALE MRNA] (ISOFORMS 2 AND 4)</scope>
    <source>
        <tissue>Hypothalamus</tissue>
    </source>
</reference>
<reference key="3">
    <citation type="submission" date="2001-05" db="EMBL/GenBank/DDBJ databases">
        <authorList>
            <person name="Li N."/>
            <person name="Zhang M."/>
            <person name="Wan T."/>
            <person name="Zhang W."/>
            <person name="Cao X."/>
        </authorList>
    </citation>
    <scope>NUCLEOTIDE SEQUENCE [LARGE SCALE MRNA] (ISOFORM 3)</scope>
</reference>
<reference key="4">
    <citation type="journal article" date="2006" name="Nature">
        <title>The DNA sequence and biological annotation of human chromosome 1.</title>
        <authorList>
            <person name="Gregory S.G."/>
            <person name="Barlow K.F."/>
            <person name="McLay K.E."/>
            <person name="Kaul R."/>
            <person name="Swarbreck D."/>
            <person name="Dunham A."/>
            <person name="Scott C.E."/>
            <person name="Howe K.L."/>
            <person name="Woodfine K."/>
            <person name="Spencer C.C.A."/>
            <person name="Jones M.C."/>
            <person name="Gillson C."/>
            <person name="Searle S."/>
            <person name="Zhou Y."/>
            <person name="Kokocinski F."/>
            <person name="McDonald L."/>
            <person name="Evans R."/>
            <person name="Phillips K."/>
            <person name="Atkinson A."/>
            <person name="Cooper R."/>
            <person name="Jones C."/>
            <person name="Hall R.E."/>
            <person name="Andrews T.D."/>
            <person name="Lloyd C."/>
            <person name="Ainscough R."/>
            <person name="Almeida J.P."/>
            <person name="Ambrose K.D."/>
            <person name="Anderson F."/>
            <person name="Andrew R.W."/>
            <person name="Ashwell R.I.S."/>
            <person name="Aubin K."/>
            <person name="Babbage A.K."/>
            <person name="Bagguley C.L."/>
            <person name="Bailey J."/>
            <person name="Beasley H."/>
            <person name="Bethel G."/>
            <person name="Bird C.P."/>
            <person name="Bray-Allen S."/>
            <person name="Brown J.Y."/>
            <person name="Brown A.J."/>
            <person name="Buckley D."/>
            <person name="Burton J."/>
            <person name="Bye J."/>
            <person name="Carder C."/>
            <person name="Chapman J.C."/>
            <person name="Clark S.Y."/>
            <person name="Clarke G."/>
            <person name="Clee C."/>
            <person name="Cobley V."/>
            <person name="Collier R.E."/>
            <person name="Corby N."/>
            <person name="Coville G.J."/>
            <person name="Davies J."/>
            <person name="Deadman R."/>
            <person name="Dunn M."/>
            <person name="Earthrowl M."/>
            <person name="Ellington A.G."/>
            <person name="Errington H."/>
            <person name="Frankish A."/>
            <person name="Frankland J."/>
            <person name="French L."/>
            <person name="Garner P."/>
            <person name="Garnett J."/>
            <person name="Gay L."/>
            <person name="Ghori M.R.J."/>
            <person name="Gibson R."/>
            <person name="Gilby L.M."/>
            <person name="Gillett W."/>
            <person name="Glithero R.J."/>
            <person name="Grafham D.V."/>
            <person name="Griffiths C."/>
            <person name="Griffiths-Jones S."/>
            <person name="Grocock R."/>
            <person name="Hammond S."/>
            <person name="Harrison E.S.I."/>
            <person name="Hart E."/>
            <person name="Haugen E."/>
            <person name="Heath P.D."/>
            <person name="Holmes S."/>
            <person name="Holt K."/>
            <person name="Howden P.J."/>
            <person name="Hunt A.R."/>
            <person name="Hunt S.E."/>
            <person name="Hunter G."/>
            <person name="Isherwood J."/>
            <person name="James R."/>
            <person name="Johnson C."/>
            <person name="Johnson D."/>
            <person name="Joy A."/>
            <person name="Kay M."/>
            <person name="Kershaw J.K."/>
            <person name="Kibukawa M."/>
            <person name="Kimberley A.M."/>
            <person name="King A."/>
            <person name="Knights A.J."/>
            <person name="Lad H."/>
            <person name="Laird G."/>
            <person name="Lawlor S."/>
            <person name="Leongamornlert D.A."/>
            <person name="Lloyd D.M."/>
            <person name="Loveland J."/>
            <person name="Lovell J."/>
            <person name="Lush M.J."/>
            <person name="Lyne R."/>
            <person name="Martin S."/>
            <person name="Mashreghi-Mohammadi M."/>
            <person name="Matthews L."/>
            <person name="Matthews N.S.W."/>
            <person name="McLaren S."/>
            <person name="Milne S."/>
            <person name="Mistry S."/>
            <person name="Moore M.J.F."/>
            <person name="Nickerson T."/>
            <person name="O'Dell C.N."/>
            <person name="Oliver K."/>
            <person name="Palmeiri A."/>
            <person name="Palmer S.A."/>
            <person name="Parker A."/>
            <person name="Patel D."/>
            <person name="Pearce A.V."/>
            <person name="Peck A.I."/>
            <person name="Pelan S."/>
            <person name="Phelps K."/>
            <person name="Phillimore B.J."/>
            <person name="Plumb R."/>
            <person name="Rajan J."/>
            <person name="Raymond C."/>
            <person name="Rouse G."/>
            <person name="Saenphimmachak C."/>
            <person name="Sehra H.K."/>
            <person name="Sheridan E."/>
            <person name="Shownkeen R."/>
            <person name="Sims S."/>
            <person name="Skuce C.D."/>
            <person name="Smith M."/>
            <person name="Steward C."/>
            <person name="Subramanian S."/>
            <person name="Sycamore N."/>
            <person name="Tracey A."/>
            <person name="Tromans A."/>
            <person name="Van Helmond Z."/>
            <person name="Wall M."/>
            <person name="Wallis J.M."/>
            <person name="White S."/>
            <person name="Whitehead S.L."/>
            <person name="Wilkinson J.E."/>
            <person name="Willey D.L."/>
            <person name="Williams H."/>
            <person name="Wilming L."/>
            <person name="Wray P.W."/>
            <person name="Wu Z."/>
            <person name="Coulson A."/>
            <person name="Vaudin M."/>
            <person name="Sulston J.E."/>
            <person name="Durbin R.M."/>
            <person name="Hubbard T."/>
            <person name="Wooster R."/>
            <person name="Dunham I."/>
            <person name="Carter N.P."/>
            <person name="McVean G."/>
            <person name="Ross M.T."/>
            <person name="Harrow J."/>
            <person name="Olson M.V."/>
            <person name="Beck S."/>
            <person name="Rogers J."/>
            <person name="Bentley D.R."/>
        </authorList>
    </citation>
    <scope>NUCLEOTIDE SEQUENCE [LARGE SCALE GENOMIC DNA]</scope>
</reference>
<reference key="5">
    <citation type="submission" date="2005-09" db="EMBL/GenBank/DDBJ databases">
        <authorList>
            <person name="Mural R.J."/>
            <person name="Istrail S."/>
            <person name="Sutton G.G."/>
            <person name="Florea L."/>
            <person name="Halpern A.L."/>
            <person name="Mobarry C.M."/>
            <person name="Lippert R."/>
            <person name="Walenz B."/>
            <person name="Shatkay H."/>
            <person name="Dew I."/>
            <person name="Miller J.R."/>
            <person name="Flanigan M.J."/>
            <person name="Edwards N.J."/>
            <person name="Bolanos R."/>
            <person name="Fasulo D."/>
            <person name="Halldorsson B.V."/>
            <person name="Hannenhalli S."/>
            <person name="Turner R."/>
            <person name="Yooseph S."/>
            <person name="Lu F."/>
            <person name="Nusskern D.R."/>
            <person name="Shue B.C."/>
            <person name="Zheng X.H."/>
            <person name="Zhong F."/>
            <person name="Delcher A.L."/>
            <person name="Huson D.H."/>
            <person name="Kravitz S.A."/>
            <person name="Mouchard L."/>
            <person name="Reinert K."/>
            <person name="Remington K.A."/>
            <person name="Clark A.G."/>
            <person name="Waterman M.S."/>
            <person name="Eichler E.E."/>
            <person name="Adams M.D."/>
            <person name="Hunkapiller M.W."/>
            <person name="Myers E.W."/>
            <person name="Venter J.C."/>
        </authorList>
    </citation>
    <scope>NUCLEOTIDE SEQUENCE [LARGE SCALE GENOMIC DNA]</scope>
</reference>
<reference key="6">
    <citation type="journal article" date="2004" name="Genome Res.">
        <title>The status, quality, and expansion of the NIH full-length cDNA project: the Mammalian Gene Collection (MGC).</title>
        <authorList>
            <consortium name="The MGC Project Team"/>
        </authorList>
    </citation>
    <scope>NUCLEOTIDE SEQUENCE [LARGE SCALE MRNA] OF 41-247 (ISOFORM 1)</scope>
    <scope>NUCLEOTIDE SEQUENCE [LARGE SCALE MRNA] OF 2-247 (ISOFORM 3)</scope>
    <scope>VARIANT ASN-239</scope>
    <source>
        <tissue>Kidney</tissue>
        <tissue>Ovary</tissue>
    </source>
</reference>
<reference key="7">
    <citation type="journal article" date="2009" name="Proteomics">
        <title>Low concentration of anti-7,8-dihydroxy-9,10-epoxy-7,8,9,10-tetrahydrobenzo[a]pyrene induces alterations of extracellular protein profile of exposed epithelial cells.</title>
        <authorList>
            <person name="Liu H."/>
            <person name="Shen J."/>
            <person name="Feng L."/>
            <person name="Yu Y."/>
        </authorList>
    </citation>
    <scope>IDENTIFICATION BY MASS SPECTROMETRY</scope>
    <scope>INDUCTION</scope>
</reference>
<sequence length="277" mass="30406">MAPLRFSANLSWLFPELSGLPARVRAAGSSGFEAVEVAWPYAETPEALARAAREAGLRLVLINTPPGDQEKGEMGLGAVPGRQAAFREGLEQAVRYAKALGCPRIHLMAGRVPQGADRIAVKAEMEAVFLENLRHAAGVLAQEDLVGLLEPINTRITDPQYFLDTPQQAAAILQKVGRPNLQLQMDIFHWQIMDGNLTGNIREFLPIVGHVQVAQVPGRGEPSSPGELNFPYLFQLLEDEGYKGFVGCEYQPRGDTVEGLSWLRSYWDRRGHPEAGQ</sequence>